<sequence>DGYTPRL</sequence>
<dbReference type="GO" id="GO:0005576">
    <property type="term" value="C:extracellular region"/>
    <property type="evidence" value="ECO:0007669"/>
    <property type="project" value="UniProtKB-SubCell"/>
</dbReference>
<dbReference type="GO" id="GO:0007218">
    <property type="term" value="P:neuropeptide signaling pathway"/>
    <property type="evidence" value="ECO:0007669"/>
    <property type="project" value="UniProtKB-KW"/>
</dbReference>
<protein>
    <recommendedName>
        <fullName evidence="4">Pyrokinin-1</fullName>
        <shortName evidence="4">PK-1</shortName>
    </recommendedName>
    <alternativeName>
        <fullName evidence="1">YXPRL-amide</fullName>
    </alternativeName>
</protein>
<proteinExistence type="evidence at protein level"/>
<reference evidence="5" key="1">
    <citation type="journal article" date="2012" name="Syst. Biol.">
        <title>Peptidomics-based phylogeny and biogeography of Mantophasmatodea (Hexapoda).</title>
        <authorList>
            <person name="Predel R."/>
            <person name="Neupert S."/>
            <person name="Huetteroth W."/>
            <person name="Kahnt J."/>
            <person name="Waidelich D."/>
            <person name="Roth S."/>
        </authorList>
    </citation>
    <scope>PROTEIN SEQUENCE</scope>
    <scope>AMIDATION AT LEU-7</scope>
    <source>
        <tissue evidence="3">Corpora cardiaca</tissue>
    </source>
</reference>
<keyword id="KW-0027">Amidation</keyword>
<keyword id="KW-0903">Direct protein sequencing</keyword>
<keyword id="KW-0527">Neuropeptide</keyword>
<keyword id="KW-0964">Secreted</keyword>
<accession>B3A0K5</accession>
<organism>
    <name type="scientific">Pachyphasma brandbergense</name>
    <name type="common">Gladiator</name>
    <name type="synonym">Heel-walker</name>
    <dbReference type="NCBI Taxonomy" id="1041430"/>
    <lineage>
        <taxon>Eukaryota</taxon>
        <taxon>Metazoa</taxon>
        <taxon>Ecdysozoa</taxon>
        <taxon>Arthropoda</taxon>
        <taxon>Hexapoda</taxon>
        <taxon>Insecta</taxon>
        <taxon>Pterygota</taxon>
        <taxon>Neoptera</taxon>
        <taxon>Polyneoptera</taxon>
        <taxon>Mantophasmatodea</taxon>
        <taxon>Mantophasmatidae</taxon>
        <taxon>Pachyphasma</taxon>
    </lineage>
</organism>
<feature type="peptide" id="PRO_0000421580" description="Pyrokinin-1" evidence="3">
    <location>
        <begin position="1"/>
        <end position="7"/>
    </location>
</feature>
<feature type="modified residue" description="Leucine amide" evidence="3">
    <location>
        <position position="7"/>
    </location>
</feature>
<comment type="function">
    <text evidence="1">Myoactive.</text>
</comment>
<comment type="subcellular location">
    <subcellularLocation>
        <location evidence="6">Secreted</location>
    </subcellularLocation>
</comment>
<comment type="similarity">
    <text evidence="2">Belongs to the pyrokinin family.</text>
</comment>
<evidence type="ECO:0000250" key="1">
    <source>
        <dbReference type="UniProtKB" id="P82619"/>
    </source>
</evidence>
<evidence type="ECO:0000255" key="2"/>
<evidence type="ECO:0000269" key="3">
    <source>
    </source>
</evidence>
<evidence type="ECO:0000303" key="4">
    <source>
    </source>
</evidence>
<evidence type="ECO:0000305" key="5"/>
<evidence type="ECO:0000305" key="6">
    <source>
    </source>
</evidence>
<name>PPK1_PACBA</name>